<accession>Q6ENE9</accession>
<evidence type="ECO:0000255" key="1">
    <source>
        <dbReference type="HAMAP-Rule" id="MF_00444"/>
    </source>
</evidence>
<evidence type="ECO:0000312" key="2">
    <source>
        <dbReference type="Proteomes" id="UP000006591"/>
    </source>
</evidence>
<organism>
    <name type="scientific">Oryza nivara</name>
    <name type="common">Indian wild rice</name>
    <name type="synonym">Oryza sativa f. spontanea</name>
    <dbReference type="NCBI Taxonomy" id="4536"/>
    <lineage>
        <taxon>Eukaryota</taxon>
        <taxon>Viridiplantae</taxon>
        <taxon>Streptophyta</taxon>
        <taxon>Embryophyta</taxon>
        <taxon>Tracheophyta</taxon>
        <taxon>Spermatophyta</taxon>
        <taxon>Magnoliopsida</taxon>
        <taxon>Liliopsida</taxon>
        <taxon>Poales</taxon>
        <taxon>Poaceae</taxon>
        <taxon>BOP clade</taxon>
        <taxon>Oryzoideae</taxon>
        <taxon>Oryzeae</taxon>
        <taxon>Oryzinae</taxon>
        <taxon>Oryza</taxon>
    </lineage>
</organism>
<geneLocation type="chloroplast"/>
<gene>
    <name evidence="1" type="primary">clpP</name>
</gene>
<dbReference type="EC" id="3.4.21.92" evidence="1"/>
<dbReference type="EMBL" id="AP006728">
    <property type="protein sequence ID" value="BAD26803.1"/>
    <property type="molecule type" value="Genomic_DNA"/>
</dbReference>
<dbReference type="RefSeq" id="YP_052774.1">
    <property type="nucleotide sequence ID" value="NC_005973.1"/>
</dbReference>
<dbReference type="SMR" id="Q6ENE9"/>
<dbReference type="STRING" id="4536.Q6ENE9"/>
<dbReference type="MEROPS" id="S14.002"/>
<dbReference type="GeneID" id="2885922"/>
<dbReference type="eggNOG" id="KOG0840">
    <property type="taxonomic scope" value="Eukaryota"/>
</dbReference>
<dbReference type="Proteomes" id="UP000006591">
    <property type="component" value="Chloroplast"/>
</dbReference>
<dbReference type="GO" id="GO:0009570">
    <property type="term" value="C:chloroplast stroma"/>
    <property type="evidence" value="ECO:0007669"/>
    <property type="project" value="UniProtKB-SubCell"/>
</dbReference>
<dbReference type="GO" id="GO:0009536">
    <property type="term" value="C:plastid"/>
    <property type="evidence" value="ECO:0000305"/>
    <property type="project" value="Gramene"/>
</dbReference>
<dbReference type="GO" id="GO:0004176">
    <property type="term" value="F:ATP-dependent peptidase activity"/>
    <property type="evidence" value="ECO:0007669"/>
    <property type="project" value="InterPro"/>
</dbReference>
<dbReference type="GO" id="GO:0004252">
    <property type="term" value="F:serine-type endopeptidase activity"/>
    <property type="evidence" value="ECO:0007669"/>
    <property type="project" value="UniProtKB-UniRule"/>
</dbReference>
<dbReference type="GO" id="GO:0006508">
    <property type="term" value="P:proteolysis"/>
    <property type="evidence" value="ECO:0007669"/>
    <property type="project" value="UniProtKB-UniRule"/>
</dbReference>
<dbReference type="CDD" id="cd07017">
    <property type="entry name" value="S14_ClpP_2"/>
    <property type="match status" value="1"/>
</dbReference>
<dbReference type="FunFam" id="3.90.226.10:FF:000006">
    <property type="entry name" value="ATP-dependent Clp protease proteolytic subunit"/>
    <property type="match status" value="1"/>
</dbReference>
<dbReference type="Gene3D" id="3.90.226.10">
    <property type="entry name" value="2-enoyl-CoA Hydratase, Chain A, domain 1"/>
    <property type="match status" value="1"/>
</dbReference>
<dbReference type="HAMAP" id="MF_00444">
    <property type="entry name" value="ClpP"/>
    <property type="match status" value="1"/>
</dbReference>
<dbReference type="InterPro" id="IPR001907">
    <property type="entry name" value="ClpP"/>
</dbReference>
<dbReference type="InterPro" id="IPR029045">
    <property type="entry name" value="ClpP/crotonase-like_dom_sf"/>
</dbReference>
<dbReference type="InterPro" id="IPR023562">
    <property type="entry name" value="ClpP/TepA"/>
</dbReference>
<dbReference type="InterPro" id="IPR033135">
    <property type="entry name" value="ClpP_His_AS"/>
</dbReference>
<dbReference type="InterPro" id="IPR018215">
    <property type="entry name" value="ClpP_Ser_AS"/>
</dbReference>
<dbReference type="PANTHER" id="PTHR48481">
    <property type="entry name" value="ATP-DEPENDENT CLP PROTEASE PROTEOLYTIC SUBUNIT"/>
    <property type="match status" value="1"/>
</dbReference>
<dbReference type="PANTHER" id="PTHR48481:SF1">
    <property type="entry name" value="ATP-DEPENDENT CLP PROTEASE PROTEOLYTIC SUBUNIT"/>
    <property type="match status" value="1"/>
</dbReference>
<dbReference type="Pfam" id="PF00574">
    <property type="entry name" value="CLP_protease"/>
    <property type="match status" value="1"/>
</dbReference>
<dbReference type="PRINTS" id="PR00127">
    <property type="entry name" value="CLPPROTEASEP"/>
</dbReference>
<dbReference type="SUPFAM" id="SSF52096">
    <property type="entry name" value="ClpP/crotonase"/>
    <property type="match status" value="1"/>
</dbReference>
<dbReference type="PROSITE" id="PS00382">
    <property type="entry name" value="CLP_PROTEASE_HIS"/>
    <property type="match status" value="1"/>
</dbReference>
<dbReference type="PROSITE" id="PS00381">
    <property type="entry name" value="CLP_PROTEASE_SER"/>
    <property type="match status" value="1"/>
</dbReference>
<name>CLPP_ORYNI</name>
<protein>
    <recommendedName>
        <fullName evidence="1">ATP-dependent Clp protease proteolytic subunit</fullName>
        <ecNumber evidence="1">3.4.21.92</ecNumber>
    </recommendedName>
    <alternativeName>
        <fullName evidence="1">Endopeptidase Clp</fullName>
    </alternativeName>
</protein>
<sequence length="216" mass="24728">MPIGVPKVPYRIPGDEEATWVDLYNVMYRERTLFLGQEIRCEVTNHITGLMVYLSIEDGISDIFLFINSPGGWLISGMAIFDTMQTVTPDIYTICLGIAASMASFILLGGEPTKRIAFPHARIMLHQPASAYYRARTPEFLLEVEELHKVREMITRVYALRTGKPFWVVSEDMERDVFMSADEAKAYGLVDIVGDEMLDEHCDTDPVWFPEMFKDW</sequence>
<keyword id="KW-0150">Chloroplast</keyword>
<keyword id="KW-0378">Hydrolase</keyword>
<keyword id="KW-0934">Plastid</keyword>
<keyword id="KW-0645">Protease</keyword>
<keyword id="KW-1185">Reference proteome</keyword>
<keyword id="KW-0720">Serine protease</keyword>
<proteinExistence type="inferred from homology"/>
<feature type="chain" id="PRO_0000179749" description="ATP-dependent Clp protease proteolytic subunit">
    <location>
        <begin position="1"/>
        <end position="216"/>
    </location>
</feature>
<feature type="active site" description="Nucleophile" evidence="1">
    <location>
        <position position="101"/>
    </location>
</feature>
<feature type="active site" evidence="1">
    <location>
        <position position="126"/>
    </location>
</feature>
<comment type="function">
    <text evidence="1">Cleaves peptides in various proteins in a process that requires ATP hydrolysis. Has a chymotrypsin-like activity. Plays a major role in the degradation of misfolded proteins.</text>
</comment>
<comment type="catalytic activity">
    <reaction evidence="1">
        <text>Hydrolysis of proteins to small peptides in the presence of ATP and magnesium. alpha-casein is the usual test substrate. In the absence of ATP, only oligopeptides shorter than five residues are hydrolyzed (such as succinyl-Leu-Tyr-|-NHMec, and Leu-Tyr-Leu-|-Tyr-Trp, in which cleavage of the -Tyr-|-Leu- and -Tyr-|-Trp bonds also occurs).</text>
        <dbReference type="EC" id="3.4.21.92"/>
    </reaction>
</comment>
<comment type="subunit">
    <text>Component of the chloroplastic Clp protease core complex.</text>
</comment>
<comment type="subcellular location">
    <subcellularLocation>
        <location evidence="1">Plastid</location>
        <location evidence="1">Chloroplast stroma</location>
    </subcellularLocation>
</comment>
<comment type="similarity">
    <text evidence="1">Belongs to the peptidase S14 family.</text>
</comment>
<reference key="1">
    <citation type="journal article" date="2004" name="Gene">
        <title>The complete nucleotide sequence of wild rice (Oryza nivara) chloroplast genome: first genome wide comparative sequence analysis of wild and cultivated rice.</title>
        <authorList>
            <person name="Masood M.S."/>
            <person name="Nishikawa T."/>
            <person name="Fukuoka S."/>
            <person name="Njenga P.K."/>
            <person name="Tsudzuki T."/>
            <person name="Kadowaki K."/>
        </authorList>
    </citation>
    <scope>NUCLEOTIDE SEQUENCE [LARGE SCALE GENOMIC DNA]</scope>
    <source>
        <strain evidence="2">cv. SL10</strain>
    </source>
</reference>